<evidence type="ECO:0000255" key="1">
    <source>
        <dbReference type="HAMAP-Rule" id="MF_01902"/>
    </source>
</evidence>
<sequence length="1024" mass="116479">MFYAELFCQSNFSFLTGASHPEELIVQANFLGYHSLAITDECSLAGIVRAHSAIKQHQLSVKQIVGSFFKLNTECQFVLLCPNREAYAELCRIITNARRRCEKGQYQLSQWDVMSLKHCLLIWLPTGQTSDEQWATWLSRYQQSRLWLGLQRHLHHDDEHYLHHCQTLANQFDLPITACGGVLMHRPERLPLQHTLTAIRHGCTVEQLGTQLLTNAEQSLRSEKKLRKLFKPQWLAESLYIASLCSFDLDSLRYEYPSELIPDGYTPDSYLEHLVEQGKKLRFPEGVPDAIEQTIQKELALIKEQKYPFFFLTIHDIVMFAKQQGILYQGRGSAANSVVCYCLQITSVDPRQIAVLFERFISKERDEPPDIDVDFEHERREEVIQYIYQKYGRQRAALAATVISYRFKSAVRQVGKALGIEETQLDFFLKNINRRDRQAGWQVQLVELGLRPDSLKGQHFIQLVEEIIGFPRHLSQHVGGFVISSGPLYELVPVENAAMPERTIIQWDKDDLESLKLLKVDVLSLGMLTAIRKCFRSIEQHHQQRLSIADITRRQDDQAVYKMIQKADTIGVFQIESRAQMSMLPRLKPACYYDLVIQIAIVRPGPIQGDMVHPFLKRRDGEEPISYPSVHVQEVLERTLGVPIFQEQVIKLAMVAAGFSGGEADQLRRAMAAWKKNGHVFKFKTKLINGMLERGYELDFAERIFEQICGFGEYGFPESHSASFAVLAYCSAWLKHYYPAEFYTALLNSQPMGFYSPSQLVQDAKRHGIAVLPICVNFSNPEHQLVRLTSGELAIRLGFNLIKGLSHEGITRLLTHRPAQGYQCISEVKQILRQAKDIQSLASANAFYQLADNRYLARWQVMDNLDELPLFQTLPSISNNPLPKPSDYQNVLEDYAATGLSLAEHPVAMLEKAGGLTRFTRANQLNQCSHRSLVTVIGLVTGKQSPGTAAGVTFFTLEDDTGNINVVVWQATSRAQKQAYLTARLLMVKGILEREGDVIHVIAGRLVDLTEKLSGLSPKSREFH</sequence>
<dbReference type="EC" id="2.7.7.7" evidence="1"/>
<dbReference type="EMBL" id="BA000037">
    <property type="protein sequence ID" value="BAC94056.1"/>
    <property type="molecule type" value="Genomic_DNA"/>
</dbReference>
<dbReference type="RefSeq" id="WP_011149979.1">
    <property type="nucleotide sequence ID" value="NC_005139.1"/>
</dbReference>
<dbReference type="SMR" id="Q7MLY4"/>
<dbReference type="STRING" id="672.VV93_v1c12100"/>
<dbReference type="KEGG" id="vvy:VV1294"/>
<dbReference type="PATRIC" id="fig|196600.6.peg.1285"/>
<dbReference type="eggNOG" id="COG0587">
    <property type="taxonomic scope" value="Bacteria"/>
</dbReference>
<dbReference type="HOGENOM" id="CLU_001600_4_0_6"/>
<dbReference type="Proteomes" id="UP000002675">
    <property type="component" value="Chromosome I"/>
</dbReference>
<dbReference type="GO" id="GO:0005737">
    <property type="term" value="C:cytoplasm"/>
    <property type="evidence" value="ECO:0007669"/>
    <property type="project" value="UniProtKB-SubCell"/>
</dbReference>
<dbReference type="GO" id="GO:0008408">
    <property type="term" value="F:3'-5' exonuclease activity"/>
    <property type="evidence" value="ECO:0007669"/>
    <property type="project" value="InterPro"/>
</dbReference>
<dbReference type="GO" id="GO:0003887">
    <property type="term" value="F:DNA-directed DNA polymerase activity"/>
    <property type="evidence" value="ECO:0007669"/>
    <property type="project" value="UniProtKB-UniRule"/>
</dbReference>
<dbReference type="GO" id="GO:0003676">
    <property type="term" value="F:nucleic acid binding"/>
    <property type="evidence" value="ECO:0007669"/>
    <property type="project" value="InterPro"/>
</dbReference>
<dbReference type="GO" id="GO:0006281">
    <property type="term" value="P:DNA repair"/>
    <property type="evidence" value="ECO:0007669"/>
    <property type="project" value="UniProtKB-UniRule"/>
</dbReference>
<dbReference type="GO" id="GO:0006260">
    <property type="term" value="P:DNA replication"/>
    <property type="evidence" value="ECO:0007669"/>
    <property type="project" value="UniProtKB-KW"/>
</dbReference>
<dbReference type="CDD" id="cd04485">
    <property type="entry name" value="DnaE_OBF"/>
    <property type="match status" value="1"/>
</dbReference>
<dbReference type="CDD" id="cd07434">
    <property type="entry name" value="PHP_PolIIIA_DnaE2"/>
    <property type="match status" value="1"/>
</dbReference>
<dbReference type="Gene3D" id="1.10.150.870">
    <property type="match status" value="1"/>
</dbReference>
<dbReference type="Gene3D" id="3.20.20.140">
    <property type="entry name" value="Metal-dependent hydrolases"/>
    <property type="match status" value="1"/>
</dbReference>
<dbReference type="HAMAP" id="MF_01902">
    <property type="entry name" value="DNApol_error_prone"/>
    <property type="match status" value="1"/>
</dbReference>
<dbReference type="InterPro" id="IPR011708">
    <property type="entry name" value="DNA_pol3_alpha_NTPase_dom"/>
</dbReference>
<dbReference type="InterPro" id="IPR040982">
    <property type="entry name" value="DNA_pol3_finger"/>
</dbReference>
<dbReference type="InterPro" id="IPR023073">
    <property type="entry name" value="DnaE2"/>
</dbReference>
<dbReference type="InterPro" id="IPR004805">
    <property type="entry name" value="DnaE2/DnaE/PolC"/>
</dbReference>
<dbReference type="InterPro" id="IPR029460">
    <property type="entry name" value="DNAPol_HHH"/>
</dbReference>
<dbReference type="InterPro" id="IPR004365">
    <property type="entry name" value="NA-bd_OB_tRNA"/>
</dbReference>
<dbReference type="InterPro" id="IPR004013">
    <property type="entry name" value="PHP_dom"/>
</dbReference>
<dbReference type="InterPro" id="IPR003141">
    <property type="entry name" value="Pol/His_phosphatase_N"/>
</dbReference>
<dbReference type="NCBIfam" id="TIGR00594">
    <property type="entry name" value="polc"/>
    <property type="match status" value="1"/>
</dbReference>
<dbReference type="NCBIfam" id="NF004225">
    <property type="entry name" value="PRK05672.1"/>
    <property type="match status" value="1"/>
</dbReference>
<dbReference type="PANTHER" id="PTHR32294">
    <property type="entry name" value="DNA POLYMERASE III SUBUNIT ALPHA"/>
    <property type="match status" value="1"/>
</dbReference>
<dbReference type="PANTHER" id="PTHR32294:SF4">
    <property type="entry name" value="ERROR-PRONE DNA POLYMERASE"/>
    <property type="match status" value="1"/>
</dbReference>
<dbReference type="Pfam" id="PF07733">
    <property type="entry name" value="DNA_pol3_alpha"/>
    <property type="match status" value="1"/>
</dbReference>
<dbReference type="Pfam" id="PF17657">
    <property type="entry name" value="DNA_pol3_finger"/>
    <property type="match status" value="1"/>
</dbReference>
<dbReference type="Pfam" id="PF14579">
    <property type="entry name" value="HHH_6"/>
    <property type="match status" value="1"/>
</dbReference>
<dbReference type="Pfam" id="PF02811">
    <property type="entry name" value="PHP"/>
    <property type="match status" value="1"/>
</dbReference>
<dbReference type="Pfam" id="PF01336">
    <property type="entry name" value="tRNA_anti-codon"/>
    <property type="match status" value="1"/>
</dbReference>
<dbReference type="SMART" id="SM00481">
    <property type="entry name" value="POLIIIAc"/>
    <property type="match status" value="1"/>
</dbReference>
<name>DNAE2_VIBVY</name>
<gene>
    <name evidence="1" type="primary">dnaE2</name>
    <name type="ordered locus">VV1294</name>
</gene>
<proteinExistence type="inferred from homology"/>
<accession>Q7MLY4</accession>
<protein>
    <recommendedName>
        <fullName evidence="1">Error-prone DNA polymerase</fullName>
        <ecNumber evidence="1">2.7.7.7</ecNumber>
    </recommendedName>
</protein>
<comment type="function">
    <text evidence="1">DNA polymerase involved in damage-induced mutagenesis and translesion synthesis (TLS). It is not the major replicative DNA polymerase.</text>
</comment>
<comment type="catalytic activity">
    <reaction evidence="1">
        <text>DNA(n) + a 2'-deoxyribonucleoside 5'-triphosphate = DNA(n+1) + diphosphate</text>
        <dbReference type="Rhea" id="RHEA:22508"/>
        <dbReference type="Rhea" id="RHEA-COMP:17339"/>
        <dbReference type="Rhea" id="RHEA-COMP:17340"/>
        <dbReference type="ChEBI" id="CHEBI:33019"/>
        <dbReference type="ChEBI" id="CHEBI:61560"/>
        <dbReference type="ChEBI" id="CHEBI:173112"/>
        <dbReference type="EC" id="2.7.7.7"/>
    </reaction>
</comment>
<comment type="subcellular location">
    <subcellularLocation>
        <location evidence="1">Cytoplasm</location>
    </subcellularLocation>
</comment>
<comment type="similarity">
    <text evidence="1">Belongs to the DNA polymerase type-C family. DnaE2 subfamily.</text>
</comment>
<organism>
    <name type="scientific">Vibrio vulnificus (strain YJ016)</name>
    <dbReference type="NCBI Taxonomy" id="196600"/>
    <lineage>
        <taxon>Bacteria</taxon>
        <taxon>Pseudomonadati</taxon>
        <taxon>Pseudomonadota</taxon>
        <taxon>Gammaproteobacteria</taxon>
        <taxon>Vibrionales</taxon>
        <taxon>Vibrionaceae</taxon>
        <taxon>Vibrio</taxon>
    </lineage>
</organism>
<keyword id="KW-0963">Cytoplasm</keyword>
<keyword id="KW-0227">DNA damage</keyword>
<keyword id="KW-0234">DNA repair</keyword>
<keyword id="KW-0235">DNA replication</keyword>
<keyword id="KW-0239">DNA-directed DNA polymerase</keyword>
<keyword id="KW-0548">Nucleotidyltransferase</keyword>
<keyword id="KW-0808">Transferase</keyword>
<reference key="1">
    <citation type="journal article" date="2003" name="Genome Res.">
        <title>Comparative genome analysis of Vibrio vulnificus, a marine pathogen.</title>
        <authorList>
            <person name="Chen C.-Y."/>
            <person name="Wu K.-M."/>
            <person name="Chang Y.-C."/>
            <person name="Chang C.-H."/>
            <person name="Tsai H.-C."/>
            <person name="Liao T.-L."/>
            <person name="Liu Y.-M."/>
            <person name="Chen H.-J."/>
            <person name="Shen A.B.-T."/>
            <person name="Li J.-C."/>
            <person name="Su T.-L."/>
            <person name="Shao C.-P."/>
            <person name="Lee C.-T."/>
            <person name="Hor L.-I."/>
            <person name="Tsai S.-F."/>
        </authorList>
    </citation>
    <scope>NUCLEOTIDE SEQUENCE [LARGE SCALE GENOMIC DNA]</scope>
    <source>
        <strain>YJ016</strain>
    </source>
</reference>
<feature type="chain" id="PRO_0000103403" description="Error-prone DNA polymerase">
    <location>
        <begin position="1"/>
        <end position="1024"/>
    </location>
</feature>